<comment type="function">
    <text evidence="1">Sequence-specific transcription factor which is part of a developmental regulatory system that provides cells with specific positional identities on the anterior-posterior axis.</text>
</comment>
<comment type="subcellular location">
    <subcellularLocation>
        <location evidence="2">Nucleus</location>
    </subcellularLocation>
</comment>
<comment type="developmental stage">
    <text evidence="4">At the 10-somite stage, expressed in the paraxial mesoderm with an anterior expression limit at somite 6. At the 20-somite stage, expressed in the developing CNS with an anterior expression limit adjacent to the somite 3/somite 4 boundary.</text>
</comment>
<comment type="similarity">
    <text evidence="5">Belongs to the Antp homeobox family.</text>
</comment>
<gene>
    <name type="primary">hoxb7a</name>
    <name type="synonym">hoxb7</name>
</gene>
<proteinExistence type="evidence at transcript level"/>
<keyword id="KW-0217">Developmental protein</keyword>
<keyword id="KW-0238">DNA-binding</keyword>
<keyword id="KW-0371">Homeobox</keyword>
<keyword id="KW-0539">Nucleus</keyword>
<keyword id="KW-1185">Reference proteome</keyword>
<keyword id="KW-0804">Transcription</keyword>
<keyword id="KW-0805">Transcription regulation</keyword>
<evidence type="ECO:0000250" key="1"/>
<evidence type="ECO:0000255" key="2">
    <source>
        <dbReference type="PROSITE-ProRule" id="PRU00108"/>
    </source>
</evidence>
<evidence type="ECO:0000256" key="3">
    <source>
        <dbReference type="SAM" id="MobiDB-lite"/>
    </source>
</evidence>
<evidence type="ECO:0000269" key="4">
    <source>
    </source>
</evidence>
<evidence type="ECO:0000305" key="5"/>
<dbReference type="EMBL" id="AL645782">
    <property type="protein sequence ID" value="CAD59112.1"/>
    <property type="molecule type" value="Genomic_DNA"/>
</dbReference>
<dbReference type="EMBL" id="DQ060542">
    <property type="protein sequence ID" value="AAY67920.1"/>
    <property type="molecule type" value="mRNA"/>
</dbReference>
<dbReference type="EMBL" id="Y14533">
    <property type="protein sequence ID" value="CAA74868.1"/>
    <property type="molecule type" value="mRNA"/>
</dbReference>
<dbReference type="RefSeq" id="NP_001108563.1">
    <property type="nucleotide sequence ID" value="NM_001115091.2"/>
</dbReference>
<dbReference type="SMR" id="Q8AWY9"/>
<dbReference type="FunCoup" id="Q8AWY9">
    <property type="interactions" value="53"/>
</dbReference>
<dbReference type="STRING" id="7955.ENSDARP00000072915"/>
<dbReference type="PaxDb" id="7955-ENSDARP00000072915"/>
<dbReference type="Ensembl" id="ENSDART00000078453">
    <property type="protein sequence ID" value="ENSDARP00000072915"/>
    <property type="gene ID" value="ENSDARG00000056030"/>
</dbReference>
<dbReference type="GeneID" id="58044"/>
<dbReference type="KEGG" id="dre:58044"/>
<dbReference type="AGR" id="ZFIN:ZDB-GENE-000329-2"/>
<dbReference type="CTD" id="58044"/>
<dbReference type="ZFIN" id="ZDB-GENE-000329-2">
    <property type="gene designation" value="hoxb7a"/>
</dbReference>
<dbReference type="eggNOG" id="KOG0489">
    <property type="taxonomic scope" value="Eukaryota"/>
</dbReference>
<dbReference type="HOGENOM" id="CLU_061398_1_1_1"/>
<dbReference type="InParanoid" id="Q8AWY9"/>
<dbReference type="OMA" id="HPNLPMV"/>
<dbReference type="OrthoDB" id="6159439at2759"/>
<dbReference type="PhylomeDB" id="Q8AWY9"/>
<dbReference type="TreeFam" id="TF316310"/>
<dbReference type="PRO" id="PR:Q8AWY9"/>
<dbReference type="Proteomes" id="UP000000437">
    <property type="component" value="Chromosome 3"/>
</dbReference>
<dbReference type="Bgee" id="ENSDARG00000056030">
    <property type="expression patterns" value="Expressed in swim bladder and 21 other cell types or tissues"/>
</dbReference>
<dbReference type="ExpressionAtlas" id="Q8AWY9">
    <property type="expression patterns" value="baseline"/>
</dbReference>
<dbReference type="GO" id="GO:0005634">
    <property type="term" value="C:nucleus"/>
    <property type="evidence" value="ECO:0000318"/>
    <property type="project" value="GO_Central"/>
</dbReference>
<dbReference type="GO" id="GO:0000981">
    <property type="term" value="F:DNA-binding transcription factor activity, RNA polymerase II-specific"/>
    <property type="evidence" value="ECO:0000318"/>
    <property type="project" value="GO_Central"/>
</dbReference>
<dbReference type="GO" id="GO:0000978">
    <property type="term" value="F:RNA polymerase II cis-regulatory region sequence-specific DNA binding"/>
    <property type="evidence" value="ECO:0000318"/>
    <property type="project" value="GO_Central"/>
</dbReference>
<dbReference type="GO" id="GO:0009952">
    <property type="term" value="P:anterior/posterior pattern specification"/>
    <property type="evidence" value="ECO:0000318"/>
    <property type="project" value="GO_Central"/>
</dbReference>
<dbReference type="GO" id="GO:0006357">
    <property type="term" value="P:regulation of transcription by RNA polymerase II"/>
    <property type="evidence" value="ECO:0000318"/>
    <property type="project" value="GO_Central"/>
</dbReference>
<dbReference type="CDD" id="cd00086">
    <property type="entry name" value="homeodomain"/>
    <property type="match status" value="1"/>
</dbReference>
<dbReference type="FunFam" id="1.10.10.60:FF:000017">
    <property type="entry name" value="Homeobox protein antennapedia"/>
    <property type="match status" value="1"/>
</dbReference>
<dbReference type="Gene3D" id="1.10.10.60">
    <property type="entry name" value="Homeodomain-like"/>
    <property type="match status" value="1"/>
</dbReference>
<dbReference type="InterPro" id="IPR050296">
    <property type="entry name" value="Antp_homeobox"/>
</dbReference>
<dbReference type="InterPro" id="IPR001356">
    <property type="entry name" value="HD"/>
</dbReference>
<dbReference type="InterPro" id="IPR020479">
    <property type="entry name" value="HD_metazoa"/>
</dbReference>
<dbReference type="InterPro" id="IPR017995">
    <property type="entry name" value="Homeobox_antennapedia"/>
</dbReference>
<dbReference type="InterPro" id="IPR001827">
    <property type="entry name" value="Homeobox_Antennapedia_CS"/>
</dbReference>
<dbReference type="InterPro" id="IPR017970">
    <property type="entry name" value="Homeobox_CS"/>
</dbReference>
<dbReference type="InterPro" id="IPR009057">
    <property type="entry name" value="Homeodomain-like_sf"/>
</dbReference>
<dbReference type="PANTHER" id="PTHR45659">
    <property type="entry name" value="HOMEOBOX PROTEIN HOX"/>
    <property type="match status" value="1"/>
</dbReference>
<dbReference type="PANTHER" id="PTHR45659:SF11">
    <property type="entry name" value="HOMEOBOX PROTEIN HOX-B7"/>
    <property type="match status" value="1"/>
</dbReference>
<dbReference type="Pfam" id="PF00046">
    <property type="entry name" value="Homeodomain"/>
    <property type="match status" value="1"/>
</dbReference>
<dbReference type="PRINTS" id="PR00025">
    <property type="entry name" value="ANTENNAPEDIA"/>
</dbReference>
<dbReference type="PRINTS" id="PR00024">
    <property type="entry name" value="HOMEOBOX"/>
</dbReference>
<dbReference type="SMART" id="SM00389">
    <property type="entry name" value="HOX"/>
    <property type="match status" value="1"/>
</dbReference>
<dbReference type="SUPFAM" id="SSF46689">
    <property type="entry name" value="Homeodomain-like"/>
    <property type="match status" value="1"/>
</dbReference>
<dbReference type="PROSITE" id="PS00032">
    <property type="entry name" value="ANTENNAPEDIA"/>
    <property type="match status" value="1"/>
</dbReference>
<dbReference type="PROSITE" id="PS00027">
    <property type="entry name" value="HOMEOBOX_1"/>
    <property type="match status" value="1"/>
</dbReference>
<dbReference type="PROSITE" id="PS50071">
    <property type="entry name" value="HOMEOBOX_2"/>
    <property type="match status" value="1"/>
</dbReference>
<name>HXB7A_DANRE</name>
<accession>Q8AWY9</accession>
<accession>O57362</accession>
<accession>Q4PRA1</accession>
<organism>
    <name type="scientific">Danio rerio</name>
    <name type="common">Zebrafish</name>
    <name type="synonym">Brachydanio rerio</name>
    <dbReference type="NCBI Taxonomy" id="7955"/>
    <lineage>
        <taxon>Eukaryota</taxon>
        <taxon>Metazoa</taxon>
        <taxon>Chordata</taxon>
        <taxon>Craniata</taxon>
        <taxon>Vertebrata</taxon>
        <taxon>Euteleostomi</taxon>
        <taxon>Actinopterygii</taxon>
        <taxon>Neopterygii</taxon>
        <taxon>Teleostei</taxon>
        <taxon>Ostariophysi</taxon>
        <taxon>Cypriniformes</taxon>
        <taxon>Danionidae</taxon>
        <taxon>Danioninae</taxon>
        <taxon>Danio</taxon>
    </lineage>
</organism>
<feature type="chain" id="PRO_0000200145" description="Homeobox protein Hox-B7a">
    <location>
        <begin position="1"/>
        <end position="227"/>
    </location>
</feature>
<feature type="DNA-binding region" description="Homeobox" evidence="2">
    <location>
        <begin position="145"/>
        <end position="204"/>
    </location>
</feature>
<feature type="region of interest" description="Disordered" evidence="3">
    <location>
        <begin position="201"/>
        <end position="227"/>
    </location>
</feature>
<feature type="short sequence motif" description="Antp-type hexapeptide">
    <location>
        <begin position="134"/>
        <end position="139"/>
    </location>
</feature>
<feature type="compositionally biased region" description="Acidic residues" evidence="3">
    <location>
        <begin position="218"/>
        <end position="227"/>
    </location>
</feature>
<feature type="sequence conflict" description="In Ref. 3; CAA74868." evidence="5" ref="3">
    <original>DEEEEDDE</original>
    <variation>ERKKKMMSSNAS</variation>
    <location>
        <begin position="220"/>
        <end position="227"/>
    </location>
</feature>
<sequence length="227" mass="25614">MSSLYYANALFSKYQVASSAFSTGVFPEQTSCAFSCSSQRASGYGSASTGAPVSSSSSVSLPSMYTNGTSLSSHTQGMYPTAYELGAVSLNMHSSLFDHPNLPMVSAGDLCKAQSSGKEEQRGYHQNNENNLRIYPWMRSTGADRKRGRQTYSRYQTLELEKEFHFNRYLSRRRRIEIAHALCLTERQIKIWFQNRRMKWKKENKSTDRCSPAADQIGGDEEEEDDE</sequence>
<reference key="1">
    <citation type="journal article" date="2013" name="Nature">
        <title>The zebrafish reference genome sequence and its relationship to the human genome.</title>
        <authorList>
            <person name="Howe K."/>
            <person name="Clark M.D."/>
            <person name="Torroja C.F."/>
            <person name="Torrance J."/>
            <person name="Berthelot C."/>
            <person name="Muffato M."/>
            <person name="Collins J.E."/>
            <person name="Humphray S."/>
            <person name="McLaren K."/>
            <person name="Matthews L."/>
            <person name="McLaren S."/>
            <person name="Sealy I."/>
            <person name="Caccamo M."/>
            <person name="Churcher C."/>
            <person name="Scott C."/>
            <person name="Barrett J.C."/>
            <person name="Koch R."/>
            <person name="Rauch G.J."/>
            <person name="White S."/>
            <person name="Chow W."/>
            <person name="Kilian B."/>
            <person name="Quintais L.T."/>
            <person name="Guerra-Assuncao J.A."/>
            <person name="Zhou Y."/>
            <person name="Gu Y."/>
            <person name="Yen J."/>
            <person name="Vogel J.H."/>
            <person name="Eyre T."/>
            <person name="Redmond S."/>
            <person name="Banerjee R."/>
            <person name="Chi J."/>
            <person name="Fu B."/>
            <person name="Langley E."/>
            <person name="Maguire S.F."/>
            <person name="Laird G.K."/>
            <person name="Lloyd D."/>
            <person name="Kenyon E."/>
            <person name="Donaldson S."/>
            <person name="Sehra H."/>
            <person name="Almeida-King J."/>
            <person name="Loveland J."/>
            <person name="Trevanion S."/>
            <person name="Jones M."/>
            <person name="Quail M."/>
            <person name="Willey D."/>
            <person name="Hunt A."/>
            <person name="Burton J."/>
            <person name="Sims S."/>
            <person name="McLay K."/>
            <person name="Plumb B."/>
            <person name="Davis J."/>
            <person name="Clee C."/>
            <person name="Oliver K."/>
            <person name="Clark R."/>
            <person name="Riddle C."/>
            <person name="Elliot D."/>
            <person name="Threadgold G."/>
            <person name="Harden G."/>
            <person name="Ware D."/>
            <person name="Begum S."/>
            <person name="Mortimore B."/>
            <person name="Kerry G."/>
            <person name="Heath P."/>
            <person name="Phillimore B."/>
            <person name="Tracey A."/>
            <person name="Corby N."/>
            <person name="Dunn M."/>
            <person name="Johnson C."/>
            <person name="Wood J."/>
            <person name="Clark S."/>
            <person name="Pelan S."/>
            <person name="Griffiths G."/>
            <person name="Smith M."/>
            <person name="Glithero R."/>
            <person name="Howden P."/>
            <person name="Barker N."/>
            <person name="Lloyd C."/>
            <person name="Stevens C."/>
            <person name="Harley J."/>
            <person name="Holt K."/>
            <person name="Panagiotidis G."/>
            <person name="Lovell J."/>
            <person name="Beasley H."/>
            <person name="Henderson C."/>
            <person name="Gordon D."/>
            <person name="Auger K."/>
            <person name="Wright D."/>
            <person name="Collins J."/>
            <person name="Raisen C."/>
            <person name="Dyer L."/>
            <person name="Leung K."/>
            <person name="Robertson L."/>
            <person name="Ambridge K."/>
            <person name="Leongamornlert D."/>
            <person name="McGuire S."/>
            <person name="Gilderthorp R."/>
            <person name="Griffiths C."/>
            <person name="Manthravadi D."/>
            <person name="Nichol S."/>
            <person name="Barker G."/>
            <person name="Whitehead S."/>
            <person name="Kay M."/>
            <person name="Brown J."/>
            <person name="Murnane C."/>
            <person name="Gray E."/>
            <person name="Humphries M."/>
            <person name="Sycamore N."/>
            <person name="Barker D."/>
            <person name="Saunders D."/>
            <person name="Wallis J."/>
            <person name="Babbage A."/>
            <person name="Hammond S."/>
            <person name="Mashreghi-Mohammadi M."/>
            <person name="Barr L."/>
            <person name="Martin S."/>
            <person name="Wray P."/>
            <person name="Ellington A."/>
            <person name="Matthews N."/>
            <person name="Ellwood M."/>
            <person name="Woodmansey R."/>
            <person name="Clark G."/>
            <person name="Cooper J."/>
            <person name="Tromans A."/>
            <person name="Grafham D."/>
            <person name="Skuce C."/>
            <person name="Pandian R."/>
            <person name="Andrews R."/>
            <person name="Harrison E."/>
            <person name="Kimberley A."/>
            <person name="Garnett J."/>
            <person name="Fosker N."/>
            <person name="Hall R."/>
            <person name="Garner P."/>
            <person name="Kelly D."/>
            <person name="Bird C."/>
            <person name="Palmer S."/>
            <person name="Gehring I."/>
            <person name="Berger A."/>
            <person name="Dooley C.M."/>
            <person name="Ersan-Urun Z."/>
            <person name="Eser C."/>
            <person name="Geiger H."/>
            <person name="Geisler M."/>
            <person name="Karotki L."/>
            <person name="Kirn A."/>
            <person name="Konantz J."/>
            <person name="Konantz M."/>
            <person name="Oberlander M."/>
            <person name="Rudolph-Geiger S."/>
            <person name="Teucke M."/>
            <person name="Lanz C."/>
            <person name="Raddatz G."/>
            <person name="Osoegawa K."/>
            <person name="Zhu B."/>
            <person name="Rapp A."/>
            <person name="Widaa S."/>
            <person name="Langford C."/>
            <person name="Yang F."/>
            <person name="Schuster S.C."/>
            <person name="Carter N.P."/>
            <person name="Harrow J."/>
            <person name="Ning Z."/>
            <person name="Herrero J."/>
            <person name="Searle S.M."/>
            <person name="Enright A."/>
            <person name="Geisler R."/>
            <person name="Plasterk R.H."/>
            <person name="Lee C."/>
            <person name="Westerfield M."/>
            <person name="de Jong P.J."/>
            <person name="Zon L.I."/>
            <person name="Postlethwait J.H."/>
            <person name="Nusslein-Volhard C."/>
            <person name="Hubbard T.J."/>
            <person name="Roest Crollius H."/>
            <person name="Rogers J."/>
            <person name="Stemple D.L."/>
        </authorList>
    </citation>
    <scope>NUCLEOTIDE SEQUENCE [LARGE SCALE GENOMIC DNA]</scope>
    <source>
        <strain>Tuebingen</strain>
    </source>
</reference>
<reference key="2">
    <citation type="journal article" date="2005" name="Evol. Dev.">
        <title>Genomic annotation and transcriptome analysis of the zebrafish (Danio rerio) hox complex with description of a novel member, hoxb13a.</title>
        <authorList>
            <person name="Corredor-Adamez M."/>
            <person name="Welten M.C.M."/>
            <person name="Spaink H.P."/>
            <person name="Jeffery J.E."/>
            <person name="Schoon R.T."/>
            <person name="de Bakker M.A.G."/>
            <person name="Bagowski C.P."/>
            <person name="Meijer A.H."/>
            <person name="Verbeek F.J."/>
            <person name="Richardson M.K."/>
        </authorList>
    </citation>
    <scope>NUCLEOTIDE SEQUENCE [MRNA] OF 51-156</scope>
    <source>
        <strain>Tuebingen</strain>
    </source>
</reference>
<reference key="3">
    <citation type="journal article" date="1998" name="Development">
        <title>Zebrafish hox genes: genomic organization and modified colinear expression patterns in the trunk.</title>
        <authorList>
            <person name="Prince V.E."/>
            <person name="Joly L."/>
            <person name="Ekker M."/>
            <person name="Ho R.K."/>
        </authorList>
    </citation>
    <scope>NUCLEOTIDE SEQUENCE [MRNA] OF 174-227</scope>
    <scope>DEVELOPMENTAL STAGE</scope>
    <source>
        <tissue>Embryo</tissue>
    </source>
</reference>
<protein>
    <recommendedName>
        <fullName>Homeobox protein Hox-B7a</fullName>
        <shortName>Hox-B7</shortName>
    </recommendedName>
</protein>